<organism>
    <name type="scientific">Pectobacterium atrosepticum (strain SCRI 1043 / ATCC BAA-672)</name>
    <name type="common">Erwinia carotovora subsp. atroseptica</name>
    <dbReference type="NCBI Taxonomy" id="218491"/>
    <lineage>
        <taxon>Bacteria</taxon>
        <taxon>Pseudomonadati</taxon>
        <taxon>Pseudomonadota</taxon>
        <taxon>Gammaproteobacteria</taxon>
        <taxon>Enterobacterales</taxon>
        <taxon>Pectobacteriaceae</taxon>
        <taxon>Pectobacterium</taxon>
    </lineage>
</organism>
<feature type="chain" id="PRO_0000236522" description="Large ribosomal subunit protein bL9">
    <location>
        <begin position="1"/>
        <end position="150"/>
    </location>
</feature>
<sequence length="150" mass="15784">MQVILLDKVANLGSLGDQVNVKAGYARNFLVPQGKAVPATKKNVEFFEARRAELEAKLADVLTAAEARATKIKELGSVTIASKAGDEGKLFGSIGTRDIADAVTAAGVDIAKSEVRLPNGVLRTIGEHVVSFQVHSDVFAELNVVVVAEA</sequence>
<protein>
    <recommendedName>
        <fullName evidence="1">Large ribosomal subunit protein bL9</fullName>
    </recommendedName>
    <alternativeName>
        <fullName evidence="2">50S ribosomal protein L9</fullName>
    </alternativeName>
</protein>
<evidence type="ECO:0000255" key="1">
    <source>
        <dbReference type="HAMAP-Rule" id="MF_00503"/>
    </source>
</evidence>
<evidence type="ECO:0000305" key="2"/>
<reference key="1">
    <citation type="journal article" date="2004" name="Proc. Natl. Acad. Sci. U.S.A.">
        <title>Genome sequence of the enterobacterial phytopathogen Erwinia carotovora subsp. atroseptica and characterization of virulence factors.</title>
        <authorList>
            <person name="Bell K.S."/>
            <person name="Sebaihia M."/>
            <person name="Pritchard L."/>
            <person name="Holden M.T.G."/>
            <person name="Hyman L.J."/>
            <person name="Holeva M.C."/>
            <person name="Thomson N.R."/>
            <person name="Bentley S.D."/>
            <person name="Churcher L.J.C."/>
            <person name="Mungall K."/>
            <person name="Atkin R."/>
            <person name="Bason N."/>
            <person name="Brooks K."/>
            <person name="Chillingworth T."/>
            <person name="Clark K."/>
            <person name="Doggett J."/>
            <person name="Fraser A."/>
            <person name="Hance Z."/>
            <person name="Hauser H."/>
            <person name="Jagels K."/>
            <person name="Moule S."/>
            <person name="Norbertczak H."/>
            <person name="Ormond D."/>
            <person name="Price C."/>
            <person name="Quail M.A."/>
            <person name="Sanders M."/>
            <person name="Walker D."/>
            <person name="Whitehead S."/>
            <person name="Salmond G.P.C."/>
            <person name="Birch P.R.J."/>
            <person name="Parkhill J."/>
            <person name="Toth I.K."/>
        </authorList>
    </citation>
    <scope>NUCLEOTIDE SEQUENCE [LARGE SCALE GENOMIC DNA]</scope>
    <source>
        <strain>SCRI 1043 / ATCC BAA-672</strain>
    </source>
</reference>
<dbReference type="EMBL" id="BX950851">
    <property type="protein sequence ID" value="CAG76508.1"/>
    <property type="molecule type" value="Genomic_DNA"/>
</dbReference>
<dbReference type="RefSeq" id="WP_011095113.1">
    <property type="nucleotide sequence ID" value="NC_004547.2"/>
</dbReference>
<dbReference type="SMR" id="Q6D138"/>
<dbReference type="STRING" id="218491.ECA3610"/>
<dbReference type="KEGG" id="eca:ECA3610"/>
<dbReference type="PATRIC" id="fig|218491.5.peg.3663"/>
<dbReference type="eggNOG" id="COG0359">
    <property type="taxonomic scope" value="Bacteria"/>
</dbReference>
<dbReference type="HOGENOM" id="CLU_078938_4_1_6"/>
<dbReference type="OrthoDB" id="9788336at2"/>
<dbReference type="Proteomes" id="UP000007966">
    <property type="component" value="Chromosome"/>
</dbReference>
<dbReference type="GO" id="GO:1990904">
    <property type="term" value="C:ribonucleoprotein complex"/>
    <property type="evidence" value="ECO:0007669"/>
    <property type="project" value="UniProtKB-KW"/>
</dbReference>
<dbReference type="GO" id="GO:0005840">
    <property type="term" value="C:ribosome"/>
    <property type="evidence" value="ECO:0007669"/>
    <property type="project" value="UniProtKB-KW"/>
</dbReference>
<dbReference type="GO" id="GO:0019843">
    <property type="term" value="F:rRNA binding"/>
    <property type="evidence" value="ECO:0007669"/>
    <property type="project" value="UniProtKB-UniRule"/>
</dbReference>
<dbReference type="GO" id="GO:0003735">
    <property type="term" value="F:structural constituent of ribosome"/>
    <property type="evidence" value="ECO:0007669"/>
    <property type="project" value="InterPro"/>
</dbReference>
<dbReference type="GO" id="GO:0006412">
    <property type="term" value="P:translation"/>
    <property type="evidence" value="ECO:0007669"/>
    <property type="project" value="UniProtKB-UniRule"/>
</dbReference>
<dbReference type="FunFam" id="3.10.430.100:FF:000001">
    <property type="entry name" value="50S ribosomal protein L9"/>
    <property type="match status" value="1"/>
</dbReference>
<dbReference type="FunFam" id="3.40.5.10:FF:000001">
    <property type="entry name" value="50S ribosomal protein L9"/>
    <property type="match status" value="1"/>
</dbReference>
<dbReference type="Gene3D" id="3.10.430.100">
    <property type="entry name" value="Ribosomal protein L9, C-terminal domain"/>
    <property type="match status" value="1"/>
</dbReference>
<dbReference type="Gene3D" id="3.40.5.10">
    <property type="entry name" value="Ribosomal protein L9, N-terminal domain"/>
    <property type="match status" value="1"/>
</dbReference>
<dbReference type="HAMAP" id="MF_00503">
    <property type="entry name" value="Ribosomal_bL9"/>
    <property type="match status" value="1"/>
</dbReference>
<dbReference type="InterPro" id="IPR000244">
    <property type="entry name" value="Ribosomal_bL9"/>
</dbReference>
<dbReference type="InterPro" id="IPR009027">
    <property type="entry name" value="Ribosomal_bL9/RNase_H1_N"/>
</dbReference>
<dbReference type="InterPro" id="IPR020594">
    <property type="entry name" value="Ribosomal_bL9_bac/chp"/>
</dbReference>
<dbReference type="InterPro" id="IPR020069">
    <property type="entry name" value="Ribosomal_bL9_C"/>
</dbReference>
<dbReference type="InterPro" id="IPR036791">
    <property type="entry name" value="Ribosomal_bL9_C_sf"/>
</dbReference>
<dbReference type="InterPro" id="IPR020070">
    <property type="entry name" value="Ribosomal_bL9_N"/>
</dbReference>
<dbReference type="InterPro" id="IPR036935">
    <property type="entry name" value="Ribosomal_bL9_N_sf"/>
</dbReference>
<dbReference type="NCBIfam" id="TIGR00158">
    <property type="entry name" value="L9"/>
    <property type="match status" value="1"/>
</dbReference>
<dbReference type="PANTHER" id="PTHR21368">
    <property type="entry name" value="50S RIBOSOMAL PROTEIN L9"/>
    <property type="match status" value="1"/>
</dbReference>
<dbReference type="Pfam" id="PF03948">
    <property type="entry name" value="Ribosomal_L9_C"/>
    <property type="match status" value="1"/>
</dbReference>
<dbReference type="Pfam" id="PF01281">
    <property type="entry name" value="Ribosomal_L9_N"/>
    <property type="match status" value="1"/>
</dbReference>
<dbReference type="SUPFAM" id="SSF55658">
    <property type="entry name" value="L9 N-domain-like"/>
    <property type="match status" value="1"/>
</dbReference>
<dbReference type="SUPFAM" id="SSF55653">
    <property type="entry name" value="Ribosomal protein L9 C-domain"/>
    <property type="match status" value="1"/>
</dbReference>
<dbReference type="PROSITE" id="PS00651">
    <property type="entry name" value="RIBOSOMAL_L9"/>
    <property type="match status" value="1"/>
</dbReference>
<gene>
    <name evidence="1" type="primary">rplI</name>
    <name type="ordered locus">ECA3610</name>
</gene>
<comment type="function">
    <text evidence="1">Binds to the 23S rRNA.</text>
</comment>
<comment type="similarity">
    <text evidence="1">Belongs to the bacterial ribosomal protein bL9 family.</text>
</comment>
<proteinExistence type="inferred from homology"/>
<accession>Q6D138</accession>
<name>RL9_PECAS</name>
<keyword id="KW-1185">Reference proteome</keyword>
<keyword id="KW-0687">Ribonucleoprotein</keyword>
<keyword id="KW-0689">Ribosomal protein</keyword>
<keyword id="KW-0694">RNA-binding</keyword>
<keyword id="KW-0699">rRNA-binding</keyword>